<accession>Q43531</accession>
<sequence length="520" mass="57887">MSRHESRKLSDDYEVVDVLGKGGFSVVRRGISKSRGKNNDVAIKTLRRYGYTLPGAQRSQPGQRGLSPLGMPTLKQVSVSDALLTNEILVMRRIVEDVSPHPNVIHLHDVYEDANGVHLVLELCSGGELFDRIVAQDRYSESEAAEVVQQIASGLAALHKSTIIHRDLKPENCLFLNQEKRSTLKIMDFGLSSVEDFTDPIVALFGSIDYVSPEALSQRQVSSASDMWSLGVILYILLSGCPPFHAPSNREKQQRILAGDFSFEEHTWKTITSSAKDLISSLLSVDPYKRPTANDLLKHPWVIGDSAKQELIEPEVVSRLRSFNARRKLRAAAIASVLSSKVLLRTKKLKNLLGSHDMKSEELENLRAHFKRICANGDNATLPEFEEVLKAMKMNSLIPLAPRVFDLFDNNRDGTIDMREILCGLSNLRNSQGDDALQLCFQMYDADRSGCISKEELASMLRALPEDCVPADITEPGKLDEIFDQMDANSDGVVTFDEFKAAMQRDSSLQDVVLSSLRTI</sequence>
<comment type="function">
    <text evidence="8">Protein kinase that may be involved in microsporogenesis.</text>
</comment>
<comment type="catalytic activity">
    <reaction>
        <text>L-seryl-[protein] + ATP = O-phospho-L-seryl-[protein] + ADP + H(+)</text>
        <dbReference type="Rhea" id="RHEA:17989"/>
        <dbReference type="Rhea" id="RHEA-COMP:9863"/>
        <dbReference type="Rhea" id="RHEA-COMP:11604"/>
        <dbReference type="ChEBI" id="CHEBI:15378"/>
        <dbReference type="ChEBI" id="CHEBI:29999"/>
        <dbReference type="ChEBI" id="CHEBI:30616"/>
        <dbReference type="ChEBI" id="CHEBI:83421"/>
        <dbReference type="ChEBI" id="CHEBI:456216"/>
        <dbReference type="EC" id="2.7.11.17"/>
    </reaction>
</comment>
<comment type="catalytic activity">
    <reaction>
        <text>L-threonyl-[protein] + ATP = O-phospho-L-threonyl-[protein] + ADP + H(+)</text>
        <dbReference type="Rhea" id="RHEA:46608"/>
        <dbReference type="Rhea" id="RHEA-COMP:11060"/>
        <dbReference type="Rhea" id="RHEA-COMP:11605"/>
        <dbReference type="ChEBI" id="CHEBI:15378"/>
        <dbReference type="ChEBI" id="CHEBI:30013"/>
        <dbReference type="ChEBI" id="CHEBI:30616"/>
        <dbReference type="ChEBI" id="CHEBI:61977"/>
        <dbReference type="ChEBI" id="CHEBI:456216"/>
        <dbReference type="EC" id="2.7.11.17"/>
    </reaction>
</comment>
<comment type="activity regulation">
    <text evidence="6 8">Activated by calcium/calmodulin binding after calcium-induced autophosphorylation. Autophosphorylation is associated with a time-dependent loss of kinase activity sensitive to reaction pH and ATP concentration. In vitro inactivation leads to the formation of network-like structures.</text>
</comment>
<comment type="subcellular location">
    <subcellularLocation>
        <location evidence="9">Membrane</location>
        <topology evidence="9">Single-pass membrane protein</topology>
    </subcellularLocation>
</comment>
<comment type="developmental stage">
    <text evidence="7">Expressed during anther development.</text>
</comment>
<comment type="PTM">
    <text evidence="5 8">Autophosphorylation stimulated by calcium and inhibited by calcium/calmodulin. Occurs probably by an intermolecular mechanism.</text>
</comment>
<comment type="similarity">
    <text evidence="9">Belongs to the protein kinase superfamily. CAMK Ser/Thr protein kinase family. CaMK subfamily.</text>
</comment>
<protein>
    <recommendedName>
        <fullName>Calcium and calcium/calmodulin-dependent serine/threonine-protein kinase</fullName>
        <shortName>LlCCaMK</shortName>
        <ecNumber>2.7.11.17</ecNumber>
    </recommendedName>
</protein>
<proteinExistence type="evidence at protein level"/>
<keyword id="KW-0067">ATP-binding</keyword>
<keyword id="KW-0106">Calcium</keyword>
<keyword id="KW-0112">Calmodulin-binding</keyword>
<keyword id="KW-0175">Coiled coil</keyword>
<keyword id="KW-0418">Kinase</keyword>
<keyword id="KW-0472">Membrane</keyword>
<keyword id="KW-0479">Metal-binding</keyword>
<keyword id="KW-0547">Nucleotide-binding</keyword>
<keyword id="KW-0597">Phosphoprotein</keyword>
<keyword id="KW-0677">Repeat</keyword>
<keyword id="KW-0723">Serine/threonine-protein kinase</keyword>
<keyword id="KW-0808">Transferase</keyword>
<keyword id="KW-0812">Transmembrane</keyword>
<keyword id="KW-1133">Transmembrane helix</keyword>
<name>CCAMK_LILLO</name>
<gene>
    <name type="primary">CCAMK</name>
</gene>
<feature type="chain" id="PRO_0000085698" description="Calcium and calcium/calmodulin-dependent serine/threonine-protein kinase">
    <location>
        <begin position="1"/>
        <end position="520"/>
    </location>
</feature>
<feature type="transmembrane region" description="Helical" evidence="1">
    <location>
        <begin position="227"/>
        <end position="243"/>
    </location>
</feature>
<feature type="domain" description="Protein kinase" evidence="2">
    <location>
        <begin position="13"/>
        <end position="302"/>
    </location>
</feature>
<feature type="domain" description="EF-hand 1" evidence="3">
    <location>
        <begin position="361"/>
        <end position="395"/>
    </location>
</feature>
<feature type="domain" description="EF-hand 2" evidence="3">
    <location>
        <begin position="396"/>
        <end position="431"/>
    </location>
</feature>
<feature type="domain" description="EF-hand 3" evidence="3">
    <location>
        <begin position="432"/>
        <end position="467"/>
    </location>
</feature>
<feature type="domain" description="EF-hand 4" evidence="3">
    <location>
        <begin position="474"/>
        <end position="509"/>
    </location>
</feature>
<feature type="region of interest" description="Calmodulin-binding" evidence="10">
    <location>
        <begin position="325"/>
        <end position="338"/>
    </location>
</feature>
<feature type="coiled-coil region" evidence="1">
    <location>
        <begin position="346"/>
        <end position="368"/>
    </location>
</feature>
<feature type="active site" description="Proton acceptor" evidence="2 4">
    <location>
        <position position="167"/>
    </location>
</feature>
<feature type="binding site" evidence="2">
    <location>
        <begin position="19"/>
        <end position="27"/>
    </location>
    <ligand>
        <name>ATP</name>
        <dbReference type="ChEBI" id="CHEBI:30616"/>
    </ligand>
</feature>
<feature type="binding site" evidence="2">
    <location>
        <position position="44"/>
    </location>
    <ligand>
        <name>ATP</name>
        <dbReference type="ChEBI" id="CHEBI:30616"/>
    </ligand>
</feature>
<feature type="binding site" evidence="3">
    <location>
        <position position="409"/>
    </location>
    <ligand>
        <name>Ca(2+)</name>
        <dbReference type="ChEBI" id="CHEBI:29108"/>
        <label>1</label>
    </ligand>
</feature>
<feature type="binding site" evidence="3">
    <location>
        <position position="411"/>
    </location>
    <ligand>
        <name>Ca(2+)</name>
        <dbReference type="ChEBI" id="CHEBI:29108"/>
        <label>1</label>
    </ligand>
</feature>
<feature type="binding site" evidence="3">
    <location>
        <position position="413"/>
    </location>
    <ligand>
        <name>Ca(2+)</name>
        <dbReference type="ChEBI" id="CHEBI:29108"/>
        <label>1</label>
    </ligand>
</feature>
<feature type="binding site" evidence="3">
    <location>
        <position position="415"/>
    </location>
    <ligand>
        <name>Ca(2+)</name>
        <dbReference type="ChEBI" id="CHEBI:29108"/>
        <label>1</label>
    </ligand>
</feature>
<feature type="binding site" evidence="3">
    <location>
        <position position="420"/>
    </location>
    <ligand>
        <name>Ca(2+)</name>
        <dbReference type="ChEBI" id="CHEBI:29108"/>
        <label>1</label>
    </ligand>
</feature>
<feature type="binding site" evidence="3">
    <location>
        <position position="445"/>
    </location>
    <ligand>
        <name>Ca(2+)</name>
        <dbReference type="ChEBI" id="CHEBI:29108"/>
        <label>2</label>
    </ligand>
</feature>
<feature type="binding site" evidence="3">
    <location>
        <position position="447"/>
    </location>
    <ligand>
        <name>Ca(2+)</name>
        <dbReference type="ChEBI" id="CHEBI:29108"/>
        <label>2</label>
    </ligand>
</feature>
<feature type="binding site" evidence="3">
    <location>
        <position position="449"/>
    </location>
    <ligand>
        <name>Ca(2+)</name>
        <dbReference type="ChEBI" id="CHEBI:29108"/>
        <label>2</label>
    </ligand>
</feature>
<feature type="binding site" evidence="3">
    <location>
        <position position="451"/>
    </location>
    <ligand>
        <name>Ca(2+)</name>
        <dbReference type="ChEBI" id="CHEBI:29108"/>
        <label>2</label>
    </ligand>
</feature>
<feature type="binding site" evidence="3">
    <location>
        <position position="456"/>
    </location>
    <ligand>
        <name>Ca(2+)</name>
        <dbReference type="ChEBI" id="CHEBI:29108"/>
        <label>2</label>
    </ligand>
</feature>
<feature type="binding site" evidence="3">
    <location>
        <position position="487"/>
    </location>
    <ligand>
        <name>Ca(2+)</name>
        <dbReference type="ChEBI" id="CHEBI:29108"/>
        <label>3</label>
    </ligand>
</feature>
<feature type="binding site" evidence="3">
    <location>
        <position position="489"/>
    </location>
    <ligand>
        <name>Ca(2+)</name>
        <dbReference type="ChEBI" id="CHEBI:29108"/>
        <label>3</label>
    </ligand>
</feature>
<feature type="binding site" evidence="3">
    <location>
        <position position="491"/>
    </location>
    <ligand>
        <name>Ca(2+)</name>
        <dbReference type="ChEBI" id="CHEBI:29108"/>
        <label>3</label>
    </ligand>
</feature>
<feature type="binding site" evidence="3">
    <location>
        <position position="498"/>
    </location>
    <ligand>
        <name>Ca(2+)</name>
        <dbReference type="ChEBI" id="CHEBI:29108"/>
        <label>3</label>
    </ligand>
</feature>
<feature type="modified residue" description="Phosphothreonine; by autocatalysis" evidence="5">
    <location>
        <position position="267"/>
    </location>
</feature>
<feature type="mutagenesis site" description="Loss of calcium/calmodulin-stimulated kinase activity." evidence="5">
    <original>T</original>
    <variation>A</variation>
    <location>
        <position position="267"/>
    </location>
</feature>
<feature type="mutagenesis site" description="No effect." evidence="8">
    <original>D</original>
    <variation>A</variation>
    <location>
        <position position="417"/>
    </location>
</feature>
<feature type="mutagenesis site" description="Decreased calcium binding." evidence="8">
    <original>S</original>
    <variation>A</variation>
    <location>
        <position position="453"/>
    </location>
</feature>
<feature type="mutagenesis site" description="No calcium binding." evidence="8">
    <original>T</original>
    <variation>A</variation>
    <location>
        <position position="495"/>
    </location>
</feature>
<evidence type="ECO:0000255" key="1"/>
<evidence type="ECO:0000255" key="2">
    <source>
        <dbReference type="PROSITE-ProRule" id="PRU00159"/>
    </source>
</evidence>
<evidence type="ECO:0000255" key="3">
    <source>
        <dbReference type="PROSITE-ProRule" id="PRU00448"/>
    </source>
</evidence>
<evidence type="ECO:0000255" key="4">
    <source>
        <dbReference type="PROSITE-ProRule" id="PRU10027"/>
    </source>
</evidence>
<evidence type="ECO:0000269" key="5">
    <source>
    </source>
</evidence>
<evidence type="ECO:0000269" key="6">
    <source>
    </source>
</evidence>
<evidence type="ECO:0000269" key="7">
    <source>
    </source>
</evidence>
<evidence type="ECO:0000269" key="8">
    <source>
    </source>
</evidence>
<evidence type="ECO:0000305" key="9"/>
<evidence type="ECO:0000305" key="10">
    <source>
    </source>
</evidence>
<organism>
    <name type="scientific">Lilium longiflorum</name>
    <name type="common">Trumpet lily</name>
    <dbReference type="NCBI Taxonomy" id="4690"/>
    <lineage>
        <taxon>Eukaryota</taxon>
        <taxon>Viridiplantae</taxon>
        <taxon>Streptophyta</taxon>
        <taxon>Embryophyta</taxon>
        <taxon>Tracheophyta</taxon>
        <taxon>Spermatophyta</taxon>
        <taxon>Magnoliopsida</taxon>
        <taxon>Liliopsida</taxon>
        <taxon>Liliales</taxon>
        <taxon>Liliaceae</taxon>
        <taxon>Lilium</taxon>
    </lineage>
</organism>
<dbReference type="EC" id="2.7.11.17"/>
<dbReference type="EMBL" id="U24188">
    <property type="protein sequence ID" value="AAC49008.1"/>
    <property type="molecule type" value="mRNA"/>
</dbReference>
<dbReference type="SMR" id="Q43531"/>
<dbReference type="iPTMnet" id="Q43531"/>
<dbReference type="GO" id="GO:0016020">
    <property type="term" value="C:membrane"/>
    <property type="evidence" value="ECO:0007669"/>
    <property type="project" value="UniProtKB-SubCell"/>
</dbReference>
<dbReference type="GO" id="GO:0005524">
    <property type="term" value="F:ATP binding"/>
    <property type="evidence" value="ECO:0007669"/>
    <property type="project" value="UniProtKB-KW"/>
</dbReference>
<dbReference type="GO" id="GO:0005509">
    <property type="term" value="F:calcium ion binding"/>
    <property type="evidence" value="ECO:0007669"/>
    <property type="project" value="InterPro"/>
</dbReference>
<dbReference type="GO" id="GO:0004683">
    <property type="term" value="F:calcium/calmodulin-dependent protein kinase activity"/>
    <property type="evidence" value="ECO:0007669"/>
    <property type="project" value="UniProtKB-EC"/>
</dbReference>
<dbReference type="GO" id="GO:0005516">
    <property type="term" value="F:calmodulin binding"/>
    <property type="evidence" value="ECO:0007669"/>
    <property type="project" value="UniProtKB-KW"/>
</dbReference>
<dbReference type="GO" id="GO:0106310">
    <property type="term" value="F:protein serine kinase activity"/>
    <property type="evidence" value="ECO:0007669"/>
    <property type="project" value="RHEA"/>
</dbReference>
<dbReference type="CDD" id="cd00051">
    <property type="entry name" value="EFh"/>
    <property type="match status" value="2"/>
</dbReference>
<dbReference type="CDD" id="cd05117">
    <property type="entry name" value="STKc_CAMK"/>
    <property type="match status" value="1"/>
</dbReference>
<dbReference type="FunFam" id="1.10.510.10:FF:000610">
    <property type="entry name" value="Calcium and calcium/calmodulin-dependent serine/threonine-protein kinase"/>
    <property type="match status" value="1"/>
</dbReference>
<dbReference type="FunFam" id="1.10.238.10:FF:000249">
    <property type="entry name" value="calcium and calcium/calmodulin-dependent serine/threonine-protein kinase DMI-3"/>
    <property type="match status" value="1"/>
</dbReference>
<dbReference type="Gene3D" id="1.10.238.10">
    <property type="entry name" value="EF-hand"/>
    <property type="match status" value="1"/>
</dbReference>
<dbReference type="Gene3D" id="3.30.200.20">
    <property type="entry name" value="Phosphorylase Kinase, domain 1"/>
    <property type="match status" value="2"/>
</dbReference>
<dbReference type="Gene3D" id="1.10.510.10">
    <property type="entry name" value="Transferase(Phosphotransferase) domain 1"/>
    <property type="match status" value="1"/>
</dbReference>
<dbReference type="InterPro" id="IPR050205">
    <property type="entry name" value="CDPK_Ser/Thr_kinases"/>
</dbReference>
<dbReference type="InterPro" id="IPR011992">
    <property type="entry name" value="EF-hand-dom_pair"/>
</dbReference>
<dbReference type="InterPro" id="IPR018247">
    <property type="entry name" value="EF_Hand_1_Ca_BS"/>
</dbReference>
<dbReference type="InterPro" id="IPR002048">
    <property type="entry name" value="EF_hand_dom"/>
</dbReference>
<dbReference type="InterPro" id="IPR011009">
    <property type="entry name" value="Kinase-like_dom_sf"/>
</dbReference>
<dbReference type="InterPro" id="IPR000719">
    <property type="entry name" value="Prot_kinase_dom"/>
</dbReference>
<dbReference type="InterPro" id="IPR017441">
    <property type="entry name" value="Protein_kinase_ATP_BS"/>
</dbReference>
<dbReference type="InterPro" id="IPR008271">
    <property type="entry name" value="Ser/Thr_kinase_AS"/>
</dbReference>
<dbReference type="PANTHER" id="PTHR24349">
    <property type="entry name" value="SERINE/THREONINE-PROTEIN KINASE"/>
    <property type="match status" value="1"/>
</dbReference>
<dbReference type="Pfam" id="PF13202">
    <property type="entry name" value="EF-hand_5"/>
    <property type="match status" value="1"/>
</dbReference>
<dbReference type="Pfam" id="PF13499">
    <property type="entry name" value="EF-hand_7"/>
    <property type="match status" value="1"/>
</dbReference>
<dbReference type="Pfam" id="PF00069">
    <property type="entry name" value="Pkinase"/>
    <property type="match status" value="1"/>
</dbReference>
<dbReference type="PRINTS" id="PR00450">
    <property type="entry name" value="RECOVERIN"/>
</dbReference>
<dbReference type="SMART" id="SM00054">
    <property type="entry name" value="EFh"/>
    <property type="match status" value="3"/>
</dbReference>
<dbReference type="SMART" id="SM00220">
    <property type="entry name" value="S_TKc"/>
    <property type="match status" value="1"/>
</dbReference>
<dbReference type="SUPFAM" id="SSF47473">
    <property type="entry name" value="EF-hand"/>
    <property type="match status" value="1"/>
</dbReference>
<dbReference type="SUPFAM" id="SSF56112">
    <property type="entry name" value="Protein kinase-like (PK-like)"/>
    <property type="match status" value="1"/>
</dbReference>
<dbReference type="PROSITE" id="PS00018">
    <property type="entry name" value="EF_HAND_1"/>
    <property type="match status" value="3"/>
</dbReference>
<dbReference type="PROSITE" id="PS50222">
    <property type="entry name" value="EF_HAND_2"/>
    <property type="match status" value="4"/>
</dbReference>
<dbReference type="PROSITE" id="PS00107">
    <property type="entry name" value="PROTEIN_KINASE_ATP"/>
    <property type="match status" value="1"/>
</dbReference>
<dbReference type="PROSITE" id="PS50011">
    <property type="entry name" value="PROTEIN_KINASE_DOM"/>
    <property type="match status" value="1"/>
</dbReference>
<dbReference type="PROSITE" id="PS00108">
    <property type="entry name" value="PROTEIN_KINASE_ST"/>
    <property type="match status" value="1"/>
</dbReference>
<reference key="1">
    <citation type="journal article" date="1995" name="Proc. Natl. Acad. Sci. U.S.A.">
        <title>Chimeric plant calcium/calmodulin-dependent protein kinase gene with a neural visinin-like calcium-binding domain.</title>
        <authorList>
            <person name="Patil S."/>
            <person name="Takezawa D."/>
            <person name="Poovaiah B.W."/>
        </authorList>
    </citation>
    <scope>NUCLEOTIDE SEQUENCE [MRNA]</scope>
    <scope>DEVELOPMENTAL STAGE</scope>
    <source>
        <strain>cv. Nellie white</strain>
        <tissue>Anther</tissue>
    </source>
</reference>
<reference key="2">
    <citation type="journal article" date="1996" name="J. Biol. Chem.">
        <title>Dual regulation of a chimeric plant serine/threonine kinase by calcium and calcium/calmodulin.</title>
        <authorList>
            <person name="Takezawa D."/>
            <person name="Ramachandiran S."/>
            <person name="Paranjape V."/>
            <person name="Poovaiah B.W."/>
        </authorList>
    </citation>
    <scope>FUNCTION</scope>
    <scope>PHOSPHORYLATION</scope>
    <scope>MUTAGENESIS OF ASP-417; SER-453 AND THR-495</scope>
    <scope>ACTIVITY REGULATION</scope>
</reference>
<reference key="3">
    <citation type="journal article" date="2001" name="J. Biol. Chem.">
        <title>Calcium-stimulated autophosphorylation site of plant chimeric calcium/calmodulin-dependent protein kinase.</title>
        <authorList>
            <person name="Sathyanarayanan P.V."/>
            <person name="Siems W.F."/>
            <person name="Jones J.P."/>
            <person name="Poovaiah B.W."/>
        </authorList>
    </citation>
    <scope>PHOSPHORYLATION AT THR-267</scope>
    <scope>MUTAGENESIS OF THR-267</scope>
    <scope>CALMODULIN BINDING</scope>
</reference>
<reference key="4">
    <citation type="journal article" date="2002" name="Eur. J. Biochem.">
        <title>Autophosphorylation-dependent inactivation of plant chimeric calcium/calmodulin-dependent protein kinase.</title>
        <authorList>
            <person name="Sathyanarayanan P.V."/>
            <person name="Poovaiah B.W."/>
        </authorList>
    </citation>
    <scope>ACTIVITY REGULATION</scope>
</reference>